<keyword id="KW-0004">4Fe-4S</keyword>
<keyword id="KW-0997">Cell inner membrane</keyword>
<keyword id="KW-1003">Cell membrane</keyword>
<keyword id="KW-0408">Iron</keyword>
<keyword id="KW-0411">Iron-sulfur</keyword>
<keyword id="KW-0472">Membrane</keyword>
<keyword id="KW-0479">Metal-binding</keyword>
<keyword id="KW-0520">NAD</keyword>
<keyword id="KW-0874">Quinone</keyword>
<keyword id="KW-1185">Reference proteome</keyword>
<keyword id="KW-1278">Translocase</keyword>
<keyword id="KW-0813">Transport</keyword>
<keyword id="KW-0830">Ubiquinone</keyword>
<reference key="1">
    <citation type="journal article" date="2003" name="J. Bacteriol.">
        <title>Comparative analyses of the complete genome sequences of Pierce's disease and citrus variegated chlorosis strains of Xylella fastidiosa.</title>
        <authorList>
            <person name="Van Sluys M.A."/>
            <person name="de Oliveira M.C."/>
            <person name="Monteiro-Vitorello C.B."/>
            <person name="Miyaki C.Y."/>
            <person name="Furlan L.R."/>
            <person name="Camargo L.E.A."/>
            <person name="da Silva A.C.R."/>
            <person name="Moon D.H."/>
            <person name="Takita M.A."/>
            <person name="Lemos E.G.M."/>
            <person name="Machado M.A."/>
            <person name="Ferro M.I.T."/>
            <person name="da Silva F.R."/>
            <person name="Goldman M.H.S."/>
            <person name="Goldman G.H."/>
            <person name="Lemos M.V.F."/>
            <person name="El-Dorry H."/>
            <person name="Tsai S.M."/>
            <person name="Carrer H."/>
            <person name="Carraro D.M."/>
            <person name="de Oliveira R.C."/>
            <person name="Nunes L.R."/>
            <person name="Siqueira W.J."/>
            <person name="Coutinho L.L."/>
            <person name="Kimura E.T."/>
            <person name="Ferro E.S."/>
            <person name="Harakava R."/>
            <person name="Kuramae E.E."/>
            <person name="Marino C.L."/>
            <person name="Giglioti E."/>
            <person name="Abreu I.L."/>
            <person name="Alves L.M.C."/>
            <person name="do Amaral A.M."/>
            <person name="Baia G.S."/>
            <person name="Blanco S.R."/>
            <person name="Brito M.S."/>
            <person name="Cannavan F.S."/>
            <person name="Celestino A.V."/>
            <person name="da Cunha A.F."/>
            <person name="Fenille R.C."/>
            <person name="Ferro J.A."/>
            <person name="Formighieri E.F."/>
            <person name="Kishi L.T."/>
            <person name="Leoni S.G."/>
            <person name="Oliveira A.R."/>
            <person name="Rosa V.E. Jr."/>
            <person name="Sassaki F.T."/>
            <person name="Sena J.A.D."/>
            <person name="de Souza A.A."/>
            <person name="Truffi D."/>
            <person name="Tsukumo F."/>
            <person name="Yanai G.M."/>
            <person name="Zaros L.G."/>
            <person name="Civerolo E.L."/>
            <person name="Simpson A.J.G."/>
            <person name="Almeida N.F. Jr."/>
            <person name="Setubal J.C."/>
            <person name="Kitajima J.P."/>
        </authorList>
    </citation>
    <scope>NUCLEOTIDE SEQUENCE [LARGE SCALE GENOMIC DNA]</scope>
    <source>
        <strain>Temecula1 / ATCC 700964</strain>
    </source>
</reference>
<sequence>MGVIQAIDRLMTNPIPDGQVDDILRPQGESPLLQKGYVTTSVDALLNWARTGSMWPMTFGLACCAVEMMHAGAARLDLDRYGIVFRPSPRQSDVMIVAGTLVNKMAPALRKVYDQMPDPKWVISMGSCANGGGYYHYSYSVVRGCDRIVPVDVYVPGCPPTAEALVYGILQLQKKIWRTKTIAG</sequence>
<organism>
    <name type="scientific">Xylella fastidiosa (strain Temecula1 / ATCC 700964)</name>
    <dbReference type="NCBI Taxonomy" id="183190"/>
    <lineage>
        <taxon>Bacteria</taxon>
        <taxon>Pseudomonadati</taxon>
        <taxon>Pseudomonadota</taxon>
        <taxon>Gammaproteobacteria</taxon>
        <taxon>Lysobacterales</taxon>
        <taxon>Lysobacteraceae</taxon>
        <taxon>Xylella</taxon>
    </lineage>
</organism>
<accession>Q87EQ4</accession>
<gene>
    <name evidence="1" type="primary">nuoB</name>
    <name type="ordered locus">PD_0249</name>
</gene>
<feature type="chain" id="PRO_0000376408" description="NADH-quinone oxidoreductase subunit B">
    <location>
        <begin position="1"/>
        <end position="184"/>
    </location>
</feature>
<feature type="binding site" evidence="1">
    <location>
        <position position="63"/>
    </location>
    <ligand>
        <name>[4Fe-4S] cluster</name>
        <dbReference type="ChEBI" id="CHEBI:49883"/>
    </ligand>
</feature>
<feature type="binding site" evidence="1">
    <location>
        <position position="64"/>
    </location>
    <ligand>
        <name>[4Fe-4S] cluster</name>
        <dbReference type="ChEBI" id="CHEBI:49883"/>
    </ligand>
</feature>
<feature type="binding site" evidence="1">
    <location>
        <position position="128"/>
    </location>
    <ligand>
        <name>[4Fe-4S] cluster</name>
        <dbReference type="ChEBI" id="CHEBI:49883"/>
    </ligand>
</feature>
<feature type="binding site" evidence="1">
    <location>
        <position position="158"/>
    </location>
    <ligand>
        <name>[4Fe-4S] cluster</name>
        <dbReference type="ChEBI" id="CHEBI:49883"/>
    </ligand>
</feature>
<dbReference type="EC" id="7.1.1.-" evidence="1"/>
<dbReference type="EMBL" id="AE009442">
    <property type="protein sequence ID" value="AAO28135.1"/>
    <property type="status" value="ALT_INIT"/>
    <property type="molecule type" value="Genomic_DNA"/>
</dbReference>
<dbReference type="RefSeq" id="WP_004087937.1">
    <property type="nucleotide sequence ID" value="NC_004556.1"/>
</dbReference>
<dbReference type="SMR" id="Q87EQ4"/>
<dbReference type="KEGG" id="xft:PD_0249"/>
<dbReference type="HOGENOM" id="CLU_055737_7_3_6"/>
<dbReference type="Proteomes" id="UP000002516">
    <property type="component" value="Chromosome"/>
</dbReference>
<dbReference type="GO" id="GO:0005886">
    <property type="term" value="C:plasma membrane"/>
    <property type="evidence" value="ECO:0007669"/>
    <property type="project" value="UniProtKB-SubCell"/>
</dbReference>
<dbReference type="GO" id="GO:0045271">
    <property type="term" value="C:respiratory chain complex I"/>
    <property type="evidence" value="ECO:0007669"/>
    <property type="project" value="TreeGrafter"/>
</dbReference>
<dbReference type="GO" id="GO:0051539">
    <property type="term" value="F:4 iron, 4 sulfur cluster binding"/>
    <property type="evidence" value="ECO:0007669"/>
    <property type="project" value="UniProtKB-KW"/>
</dbReference>
<dbReference type="GO" id="GO:0005506">
    <property type="term" value="F:iron ion binding"/>
    <property type="evidence" value="ECO:0007669"/>
    <property type="project" value="UniProtKB-UniRule"/>
</dbReference>
<dbReference type="GO" id="GO:0008137">
    <property type="term" value="F:NADH dehydrogenase (ubiquinone) activity"/>
    <property type="evidence" value="ECO:0007669"/>
    <property type="project" value="InterPro"/>
</dbReference>
<dbReference type="GO" id="GO:0050136">
    <property type="term" value="F:NADH:ubiquinone reductase (non-electrogenic) activity"/>
    <property type="evidence" value="ECO:0007669"/>
    <property type="project" value="UniProtKB-UniRule"/>
</dbReference>
<dbReference type="GO" id="GO:0048038">
    <property type="term" value="F:quinone binding"/>
    <property type="evidence" value="ECO:0007669"/>
    <property type="project" value="UniProtKB-KW"/>
</dbReference>
<dbReference type="GO" id="GO:0009060">
    <property type="term" value="P:aerobic respiration"/>
    <property type="evidence" value="ECO:0007669"/>
    <property type="project" value="TreeGrafter"/>
</dbReference>
<dbReference type="GO" id="GO:0015990">
    <property type="term" value="P:electron transport coupled proton transport"/>
    <property type="evidence" value="ECO:0007669"/>
    <property type="project" value="TreeGrafter"/>
</dbReference>
<dbReference type="FunFam" id="3.40.50.12280:FF:000001">
    <property type="entry name" value="NADH-quinone oxidoreductase subunit B 2"/>
    <property type="match status" value="1"/>
</dbReference>
<dbReference type="Gene3D" id="3.40.50.12280">
    <property type="match status" value="1"/>
</dbReference>
<dbReference type="HAMAP" id="MF_01356">
    <property type="entry name" value="NDH1_NuoB"/>
    <property type="match status" value="1"/>
</dbReference>
<dbReference type="InterPro" id="IPR006137">
    <property type="entry name" value="NADH_UbQ_OxRdtase-like_20kDa"/>
</dbReference>
<dbReference type="InterPro" id="IPR006138">
    <property type="entry name" value="NADH_UQ_OxRdtase_20Kd_su"/>
</dbReference>
<dbReference type="NCBIfam" id="TIGR01957">
    <property type="entry name" value="nuoB_fam"/>
    <property type="match status" value="1"/>
</dbReference>
<dbReference type="NCBIfam" id="NF005012">
    <property type="entry name" value="PRK06411.1"/>
    <property type="match status" value="1"/>
</dbReference>
<dbReference type="PANTHER" id="PTHR11995">
    <property type="entry name" value="NADH DEHYDROGENASE"/>
    <property type="match status" value="1"/>
</dbReference>
<dbReference type="PANTHER" id="PTHR11995:SF14">
    <property type="entry name" value="NADH DEHYDROGENASE [UBIQUINONE] IRON-SULFUR PROTEIN 7, MITOCHONDRIAL"/>
    <property type="match status" value="1"/>
</dbReference>
<dbReference type="Pfam" id="PF01058">
    <property type="entry name" value="Oxidored_q6"/>
    <property type="match status" value="1"/>
</dbReference>
<dbReference type="SUPFAM" id="SSF56770">
    <property type="entry name" value="HydA/Nqo6-like"/>
    <property type="match status" value="1"/>
</dbReference>
<dbReference type="PROSITE" id="PS01150">
    <property type="entry name" value="COMPLEX1_20K"/>
    <property type="match status" value="1"/>
</dbReference>
<proteinExistence type="inferred from homology"/>
<protein>
    <recommendedName>
        <fullName evidence="1">NADH-quinone oxidoreductase subunit B</fullName>
        <ecNumber evidence="1">7.1.1.-</ecNumber>
    </recommendedName>
    <alternativeName>
        <fullName evidence="1">NADH dehydrogenase I subunit B</fullName>
    </alternativeName>
    <alternativeName>
        <fullName evidence="1">NDH-1 subunit B</fullName>
    </alternativeName>
</protein>
<evidence type="ECO:0000255" key="1">
    <source>
        <dbReference type="HAMAP-Rule" id="MF_01356"/>
    </source>
</evidence>
<evidence type="ECO:0000305" key="2"/>
<name>NUOB_XYLFT</name>
<comment type="function">
    <text evidence="1">NDH-1 shuttles electrons from NADH, via FMN and iron-sulfur (Fe-S) centers, to quinones in the respiratory chain. The immediate electron acceptor for the enzyme in this species is believed to be ubiquinone. Couples the redox reaction to proton translocation (for every two electrons transferred, four hydrogen ions are translocated across the cytoplasmic membrane), and thus conserves the redox energy in a proton gradient.</text>
</comment>
<comment type="catalytic activity">
    <reaction evidence="1">
        <text>a quinone + NADH + 5 H(+)(in) = a quinol + NAD(+) + 4 H(+)(out)</text>
        <dbReference type="Rhea" id="RHEA:57888"/>
        <dbReference type="ChEBI" id="CHEBI:15378"/>
        <dbReference type="ChEBI" id="CHEBI:24646"/>
        <dbReference type="ChEBI" id="CHEBI:57540"/>
        <dbReference type="ChEBI" id="CHEBI:57945"/>
        <dbReference type="ChEBI" id="CHEBI:132124"/>
    </reaction>
</comment>
<comment type="cofactor">
    <cofactor evidence="1">
        <name>[4Fe-4S] cluster</name>
        <dbReference type="ChEBI" id="CHEBI:49883"/>
    </cofactor>
    <text evidence="1">Binds 1 [4Fe-4S] cluster.</text>
</comment>
<comment type="subunit">
    <text evidence="1">NDH-1 is composed of 14 different subunits. Subunits NuoB, C, D, E, F, and G constitute the peripheral sector of the complex.</text>
</comment>
<comment type="subcellular location">
    <subcellularLocation>
        <location evidence="1">Cell inner membrane</location>
        <topology evidence="1">Peripheral membrane protein</topology>
        <orientation evidence="1">Cytoplasmic side</orientation>
    </subcellularLocation>
</comment>
<comment type="similarity">
    <text evidence="1">Belongs to the complex I 20 kDa subunit family.</text>
</comment>
<comment type="sequence caution" evidence="2">
    <conflict type="erroneous initiation">
        <sequence resource="EMBL-CDS" id="AAO28135"/>
    </conflict>
</comment>